<proteinExistence type="evidence at protein level"/>
<protein>
    <recommendedName>
        <fullName>T-cell surface glycoprotein CD4</fullName>
    </recommendedName>
    <alternativeName>
        <fullName>T-cell surface antigen T4/Leu-3</fullName>
    </alternativeName>
    <cdAntigenName>CD4</cdAntigenName>
</protein>
<keyword id="KW-1064">Adaptive immunity</keyword>
<keyword id="KW-0903">Direct protein sequencing</keyword>
<keyword id="KW-0391">Immunity</keyword>
<keyword id="KW-0393">Immunoglobulin domain</keyword>
<keyword id="KW-0472">Membrane</keyword>
<keyword id="KW-1185">Reference proteome</keyword>
<organism>
    <name type="scientific">Ovis aries</name>
    <name type="common">Sheep</name>
    <dbReference type="NCBI Taxonomy" id="9940"/>
    <lineage>
        <taxon>Eukaryota</taxon>
        <taxon>Metazoa</taxon>
        <taxon>Chordata</taxon>
        <taxon>Craniata</taxon>
        <taxon>Vertebrata</taxon>
        <taxon>Euteleostomi</taxon>
        <taxon>Mammalia</taxon>
        <taxon>Eutheria</taxon>
        <taxon>Laurasiatheria</taxon>
        <taxon>Artiodactyla</taxon>
        <taxon>Ruminantia</taxon>
        <taxon>Pecora</taxon>
        <taxon>Bovidae</taxon>
        <taxon>Caprinae</taxon>
        <taxon>Ovis</taxon>
    </lineage>
</organism>
<sequence length="20" mass="1928">KAVVLGKAGGTAELPCQASQ</sequence>
<dbReference type="PIR" id="B47642">
    <property type="entry name" value="B47642"/>
</dbReference>
<dbReference type="STRING" id="9940.ENSOARP00000006749"/>
<dbReference type="PaxDb" id="9940-ENSOARP00000006749"/>
<dbReference type="eggNOG" id="ENOG502S0W5">
    <property type="taxonomic scope" value="Eukaryota"/>
</dbReference>
<dbReference type="Proteomes" id="UP000002356">
    <property type="component" value="Unplaced"/>
</dbReference>
<dbReference type="GO" id="GO:0016020">
    <property type="term" value="C:membrane"/>
    <property type="evidence" value="ECO:0007669"/>
    <property type="project" value="UniProtKB-SubCell"/>
</dbReference>
<dbReference type="GO" id="GO:0002250">
    <property type="term" value="P:adaptive immune response"/>
    <property type="evidence" value="ECO:0007669"/>
    <property type="project" value="UniProtKB-KW"/>
</dbReference>
<dbReference type="GO" id="GO:0030217">
    <property type="term" value="P:T cell differentiation"/>
    <property type="evidence" value="ECO:0000250"/>
    <property type="project" value="UniProtKB"/>
</dbReference>
<dbReference type="GO" id="GO:0045058">
    <property type="term" value="P:T cell selection"/>
    <property type="evidence" value="ECO:0000250"/>
    <property type="project" value="UniProtKB"/>
</dbReference>
<evidence type="ECO:0000250" key="1"/>
<accession>P05542</accession>
<comment type="function">
    <text>Accessory protein for MHC class-II antigen/T-cell receptor interaction. May regulate T-cell activation.</text>
</comment>
<comment type="subunit">
    <text evidence="1">Associates with p56-LCK. Interacts with SPG21 (By similarity).</text>
</comment>
<comment type="subcellular location">
    <subcellularLocation>
        <location>Membrane</location>
        <topology>Single-pass type I membrane protein</topology>
    </subcellularLocation>
</comment>
<name>CD4_SHEEP</name>
<gene>
    <name type="primary">CD4</name>
</gene>
<reference key="1">
    <citation type="journal article" date="1986" name="Immunogenetics">
        <title>The L3T4 antigen in mouse and the sheep equivalent are immunoglobulin-like.</title>
        <authorList>
            <person name="Classon B.J."/>
            <person name="Tsagaratos J."/>
            <person name="Kirszbaum L."/>
            <person name="Maddox J."/>
            <person name="McKay C.R."/>
            <person name="Brandon M."/>
            <person name="McKenzie I.F.C."/>
            <person name="Walker I.D."/>
        </authorList>
    </citation>
    <scope>PROTEIN SEQUENCE</scope>
</reference>
<feature type="chain" id="PRO_0000072675" description="T-cell surface glycoprotein CD4">
    <location>
        <begin position="1"/>
        <end position="20" status="greater than"/>
    </location>
</feature>
<feature type="non-terminal residue">
    <location>
        <position position="20"/>
    </location>
</feature>